<accession>Q9C8X7</accession>
<proteinExistence type="evidence at transcript level"/>
<organism>
    <name type="scientific">Arabidopsis thaliana</name>
    <name type="common">Mouse-ear cress</name>
    <dbReference type="NCBI Taxonomy" id="3702"/>
    <lineage>
        <taxon>Eukaryota</taxon>
        <taxon>Viridiplantae</taxon>
        <taxon>Streptophyta</taxon>
        <taxon>Embryophyta</taxon>
        <taxon>Tracheophyta</taxon>
        <taxon>Spermatophyta</taxon>
        <taxon>Magnoliopsida</taxon>
        <taxon>eudicotyledons</taxon>
        <taxon>Gunneridae</taxon>
        <taxon>Pentapetalae</taxon>
        <taxon>rosids</taxon>
        <taxon>malvids</taxon>
        <taxon>Brassicales</taxon>
        <taxon>Brassicaceae</taxon>
        <taxon>Camelineae</taxon>
        <taxon>Arabidopsis</taxon>
    </lineage>
</organism>
<evidence type="ECO:0000250" key="1">
    <source>
        <dbReference type="UniProtKB" id="P42743"/>
    </source>
</evidence>
<evidence type="ECO:0000255" key="2">
    <source>
        <dbReference type="PROSITE-ProRule" id="PRU00388"/>
    </source>
</evidence>
<evidence type="ECO:0000269" key="3">
    <source>
    </source>
</evidence>
<gene>
    <name type="primary">UBC31</name>
    <name type="ordered locus">At1g36340</name>
    <name type="ORF">F7F23.6</name>
</gene>
<name>UBC31_ARATH</name>
<keyword id="KW-0067">ATP-binding</keyword>
<keyword id="KW-0547">Nucleotide-binding</keyword>
<keyword id="KW-1185">Reference proteome</keyword>
<keyword id="KW-0808">Transferase</keyword>
<keyword id="KW-0833">Ubl conjugation pathway</keyword>
<feature type="chain" id="PRO_0000345196" description="Probable ubiquitin-conjugating enzyme E2 31">
    <location>
        <begin position="1"/>
        <end position="154"/>
    </location>
</feature>
<feature type="domain" description="UBC core" evidence="2">
    <location>
        <begin position="8"/>
        <end position="153"/>
    </location>
</feature>
<feature type="active site" description="Glycyl thioester intermediate" evidence="2">
    <location>
        <position position="91"/>
    </location>
</feature>
<dbReference type="EC" id="2.3.2.23"/>
<dbReference type="EMBL" id="DQ027044">
    <property type="protein sequence ID" value="AAY44870.1"/>
    <property type="molecule type" value="mRNA"/>
</dbReference>
<dbReference type="EMBL" id="AC021199">
    <property type="protein sequence ID" value="AAG52201.1"/>
    <property type="molecule type" value="Genomic_DNA"/>
</dbReference>
<dbReference type="EMBL" id="CP002684">
    <property type="protein sequence ID" value="AEE31861.1"/>
    <property type="molecule type" value="Genomic_DNA"/>
</dbReference>
<dbReference type="EMBL" id="CP002684">
    <property type="protein sequence ID" value="ANM59827.1"/>
    <property type="molecule type" value="Genomic_DNA"/>
</dbReference>
<dbReference type="EMBL" id="BT015146">
    <property type="protein sequence ID" value="AAT85742.1"/>
    <property type="molecule type" value="mRNA"/>
</dbReference>
<dbReference type="EMBL" id="BT015658">
    <property type="protein sequence ID" value="AAU15157.1"/>
    <property type="molecule type" value="mRNA"/>
</dbReference>
<dbReference type="PIR" id="E86484">
    <property type="entry name" value="E86484"/>
</dbReference>
<dbReference type="RefSeq" id="NP_001319154.1">
    <property type="nucleotide sequence ID" value="NM_001333179.1"/>
</dbReference>
<dbReference type="RefSeq" id="NP_564472.1">
    <property type="nucleotide sequence ID" value="NM_103322.3"/>
</dbReference>
<dbReference type="SMR" id="Q9C8X7"/>
<dbReference type="FunCoup" id="Q9C8X7">
    <property type="interactions" value="7"/>
</dbReference>
<dbReference type="STRING" id="3702.Q9C8X7"/>
<dbReference type="PaxDb" id="3702-AT1G36340.1"/>
<dbReference type="ProteomicsDB" id="243218"/>
<dbReference type="EnsemblPlants" id="AT1G36340.1">
    <property type="protein sequence ID" value="AT1G36340.1"/>
    <property type="gene ID" value="AT1G36340"/>
</dbReference>
<dbReference type="EnsemblPlants" id="AT1G36340.2">
    <property type="protein sequence ID" value="AT1G36340.2"/>
    <property type="gene ID" value="AT1G36340"/>
</dbReference>
<dbReference type="GeneID" id="840541"/>
<dbReference type="Gramene" id="AT1G36340.1">
    <property type="protein sequence ID" value="AT1G36340.1"/>
    <property type="gene ID" value="AT1G36340"/>
</dbReference>
<dbReference type="Gramene" id="AT1G36340.2">
    <property type="protein sequence ID" value="AT1G36340.2"/>
    <property type="gene ID" value="AT1G36340"/>
</dbReference>
<dbReference type="KEGG" id="ath:AT1G36340"/>
<dbReference type="Araport" id="AT1G36340"/>
<dbReference type="TAIR" id="AT1G36340">
    <property type="gene designation" value="UBC31"/>
</dbReference>
<dbReference type="eggNOG" id="KOG0417">
    <property type="taxonomic scope" value="Eukaryota"/>
</dbReference>
<dbReference type="HOGENOM" id="CLU_030988_13_3_1"/>
<dbReference type="InParanoid" id="Q9C8X7"/>
<dbReference type="OMA" id="CMDLLNM"/>
<dbReference type="PhylomeDB" id="Q9C8X7"/>
<dbReference type="UniPathway" id="UPA00143"/>
<dbReference type="PRO" id="PR:Q9C8X7"/>
<dbReference type="Proteomes" id="UP000006548">
    <property type="component" value="Chromosome 1"/>
</dbReference>
<dbReference type="ExpressionAtlas" id="Q9C8X7">
    <property type="expression patterns" value="baseline and differential"/>
</dbReference>
<dbReference type="GO" id="GO:0000325">
    <property type="term" value="C:plant-type vacuole"/>
    <property type="evidence" value="ECO:0007005"/>
    <property type="project" value="TAIR"/>
</dbReference>
<dbReference type="GO" id="GO:0005524">
    <property type="term" value="F:ATP binding"/>
    <property type="evidence" value="ECO:0007669"/>
    <property type="project" value="UniProtKB-KW"/>
</dbReference>
<dbReference type="GO" id="GO:0061631">
    <property type="term" value="F:ubiquitin conjugating enzyme activity"/>
    <property type="evidence" value="ECO:0007669"/>
    <property type="project" value="UniProtKB-EC"/>
</dbReference>
<dbReference type="GO" id="GO:0016567">
    <property type="term" value="P:protein ubiquitination"/>
    <property type="evidence" value="ECO:0007669"/>
    <property type="project" value="UniProtKB-UniPathway"/>
</dbReference>
<dbReference type="FunFam" id="3.10.110.10:FF:000060">
    <property type="entry name" value="Ubiquitin conjugating enzyme (UbcB)"/>
    <property type="match status" value="1"/>
</dbReference>
<dbReference type="Gene3D" id="3.10.110.10">
    <property type="entry name" value="Ubiquitin Conjugating Enzyme"/>
    <property type="match status" value="1"/>
</dbReference>
<dbReference type="InterPro" id="IPR000608">
    <property type="entry name" value="UBQ-conjugat_E2_core"/>
</dbReference>
<dbReference type="InterPro" id="IPR016135">
    <property type="entry name" value="UBQ-conjugating_enzyme/RWD"/>
</dbReference>
<dbReference type="PANTHER" id="PTHR24068">
    <property type="entry name" value="UBIQUITIN-CONJUGATING ENZYME E2"/>
    <property type="match status" value="1"/>
</dbReference>
<dbReference type="Pfam" id="PF00179">
    <property type="entry name" value="UQ_con"/>
    <property type="match status" value="1"/>
</dbReference>
<dbReference type="SMART" id="SM00212">
    <property type="entry name" value="UBCc"/>
    <property type="match status" value="1"/>
</dbReference>
<dbReference type="SUPFAM" id="SSF54495">
    <property type="entry name" value="UBC-like"/>
    <property type="match status" value="1"/>
</dbReference>
<dbReference type="PROSITE" id="PS50127">
    <property type="entry name" value="UBC_2"/>
    <property type="match status" value="1"/>
</dbReference>
<comment type="function">
    <text evidence="1">Accepts the ubiquitin from the E1 complex and catalyzes its covalent attachment to other proteins.</text>
</comment>
<comment type="catalytic activity">
    <reaction evidence="2">
        <text>S-ubiquitinyl-[E1 ubiquitin-activating enzyme]-L-cysteine + [E2 ubiquitin-conjugating enzyme]-L-cysteine = [E1 ubiquitin-activating enzyme]-L-cysteine + S-ubiquitinyl-[E2 ubiquitin-conjugating enzyme]-L-cysteine.</text>
        <dbReference type="EC" id="2.3.2.23"/>
    </reaction>
</comment>
<comment type="pathway">
    <text evidence="2">Protein modification; protein ubiquitination.</text>
</comment>
<comment type="induction">
    <text evidence="3">By biotic stresses.</text>
</comment>
<comment type="similarity">
    <text evidence="2">Belongs to the ubiquitin-conjugating enzyme family.</text>
</comment>
<protein>
    <recommendedName>
        <fullName>Probable ubiquitin-conjugating enzyme E2 31</fullName>
        <ecNumber>2.3.2.23</ecNumber>
    </recommendedName>
    <alternativeName>
        <fullName>E2 ubiquitin-conjugating enzyme 31</fullName>
    </alternativeName>
    <alternativeName>
        <fullName>Ubiquitin carrier protein 31</fullName>
    </alternativeName>
</protein>
<sequence length="154" mass="17833">MFKKMDKKAAQRIAMEYRAMISKESLFSIGQNSNNIYEWTAVIRGPDGTPYEGGMFNLSIKFPTDYPFKPPKFTFKTPIYHPNINDEGSICMNILKDKWTPALMVEKVLLSILLLLEKPNPDDPLVPEIGQLFKNNRFQFDQRAREFTARHANN</sequence>
<reference key="1">
    <citation type="journal article" date="2005" name="Plant Physiol.">
        <title>Genome analysis and functional characterization of the E2 and RING-type E3 ligase ubiquitination enzymes of Arabidopsis.</title>
        <authorList>
            <person name="Kraft E."/>
            <person name="Stone S.L."/>
            <person name="Ma L."/>
            <person name="Su N."/>
            <person name="Gao Y."/>
            <person name="Lau O.-S."/>
            <person name="Deng X.-W."/>
            <person name="Callis J."/>
        </authorList>
    </citation>
    <scope>NUCLEOTIDE SEQUENCE [MRNA]</scope>
    <scope>INDUCTION</scope>
    <scope>GENE FAMILY</scope>
    <scope>NOMENCLATURE</scope>
</reference>
<reference key="2">
    <citation type="journal article" date="2000" name="Nature">
        <title>Sequence and analysis of chromosome 1 of the plant Arabidopsis thaliana.</title>
        <authorList>
            <person name="Theologis A."/>
            <person name="Ecker J.R."/>
            <person name="Palm C.J."/>
            <person name="Federspiel N.A."/>
            <person name="Kaul S."/>
            <person name="White O."/>
            <person name="Alonso J."/>
            <person name="Altafi H."/>
            <person name="Araujo R."/>
            <person name="Bowman C.L."/>
            <person name="Brooks S.Y."/>
            <person name="Buehler E."/>
            <person name="Chan A."/>
            <person name="Chao Q."/>
            <person name="Chen H."/>
            <person name="Cheuk R.F."/>
            <person name="Chin C.W."/>
            <person name="Chung M.K."/>
            <person name="Conn L."/>
            <person name="Conway A.B."/>
            <person name="Conway A.R."/>
            <person name="Creasy T.H."/>
            <person name="Dewar K."/>
            <person name="Dunn P."/>
            <person name="Etgu P."/>
            <person name="Feldblyum T.V."/>
            <person name="Feng J.-D."/>
            <person name="Fong B."/>
            <person name="Fujii C.Y."/>
            <person name="Gill J.E."/>
            <person name="Goldsmith A.D."/>
            <person name="Haas B."/>
            <person name="Hansen N.F."/>
            <person name="Hughes B."/>
            <person name="Huizar L."/>
            <person name="Hunter J.L."/>
            <person name="Jenkins J."/>
            <person name="Johnson-Hopson C."/>
            <person name="Khan S."/>
            <person name="Khaykin E."/>
            <person name="Kim C.J."/>
            <person name="Koo H.L."/>
            <person name="Kremenetskaia I."/>
            <person name="Kurtz D.B."/>
            <person name="Kwan A."/>
            <person name="Lam B."/>
            <person name="Langin-Hooper S."/>
            <person name="Lee A."/>
            <person name="Lee J.M."/>
            <person name="Lenz C.A."/>
            <person name="Li J.H."/>
            <person name="Li Y.-P."/>
            <person name="Lin X."/>
            <person name="Liu S.X."/>
            <person name="Liu Z.A."/>
            <person name="Luros J.S."/>
            <person name="Maiti R."/>
            <person name="Marziali A."/>
            <person name="Militscher J."/>
            <person name="Miranda M."/>
            <person name="Nguyen M."/>
            <person name="Nierman W.C."/>
            <person name="Osborne B.I."/>
            <person name="Pai G."/>
            <person name="Peterson J."/>
            <person name="Pham P.K."/>
            <person name="Rizzo M."/>
            <person name="Rooney T."/>
            <person name="Rowley D."/>
            <person name="Sakano H."/>
            <person name="Salzberg S.L."/>
            <person name="Schwartz J.R."/>
            <person name="Shinn P."/>
            <person name="Southwick A.M."/>
            <person name="Sun H."/>
            <person name="Tallon L.J."/>
            <person name="Tambunga G."/>
            <person name="Toriumi M.J."/>
            <person name="Town C.D."/>
            <person name="Utterback T."/>
            <person name="Van Aken S."/>
            <person name="Vaysberg M."/>
            <person name="Vysotskaia V.S."/>
            <person name="Walker M."/>
            <person name="Wu D."/>
            <person name="Yu G."/>
            <person name="Fraser C.M."/>
            <person name="Venter J.C."/>
            <person name="Davis R.W."/>
        </authorList>
    </citation>
    <scope>NUCLEOTIDE SEQUENCE [LARGE SCALE GENOMIC DNA]</scope>
    <source>
        <strain>cv. Columbia</strain>
    </source>
</reference>
<reference key="3">
    <citation type="journal article" date="2017" name="Plant J.">
        <title>Araport11: a complete reannotation of the Arabidopsis thaliana reference genome.</title>
        <authorList>
            <person name="Cheng C.Y."/>
            <person name="Krishnakumar V."/>
            <person name="Chan A.P."/>
            <person name="Thibaud-Nissen F."/>
            <person name="Schobel S."/>
            <person name="Town C.D."/>
        </authorList>
    </citation>
    <scope>GENOME REANNOTATION</scope>
    <source>
        <strain>cv. Columbia</strain>
    </source>
</reference>
<reference key="4">
    <citation type="submission" date="2004-08" db="EMBL/GenBank/DDBJ databases">
        <title>Arabidopsis ORF clones.</title>
        <authorList>
            <person name="Cheuk R.F."/>
            <person name="Chen H."/>
            <person name="Kim C.J."/>
            <person name="Shinn P."/>
            <person name="Ecker J.R."/>
        </authorList>
    </citation>
    <scope>NUCLEOTIDE SEQUENCE [LARGE SCALE MRNA]</scope>
    <source>
        <strain>cv. Columbia</strain>
    </source>
</reference>